<reference key="1">
    <citation type="journal article" date="2008" name="J. Bacteriol.">
        <title>Genome sequence of a nephritogenic and highly transformable M49 strain of Streptococcus pyogenes.</title>
        <authorList>
            <person name="McShan W.M."/>
            <person name="Ferretti J.J."/>
            <person name="Karasawa T."/>
            <person name="Suvorov A.N."/>
            <person name="Lin S."/>
            <person name="Qin B."/>
            <person name="Jia H."/>
            <person name="Kenton S."/>
            <person name="Najar F."/>
            <person name="Wu H."/>
            <person name="Scott J."/>
            <person name="Roe B.A."/>
            <person name="Savic D.J."/>
        </authorList>
    </citation>
    <scope>NUCLEOTIDE SEQUENCE [LARGE SCALE GENOMIC DNA]</scope>
    <source>
        <strain>NZ131</strain>
    </source>
</reference>
<protein>
    <recommendedName>
        <fullName evidence="1">Ribosome-recycling factor</fullName>
        <shortName evidence="1">RRF</shortName>
    </recommendedName>
    <alternativeName>
        <fullName evidence="1">Ribosome-releasing factor</fullName>
    </alternativeName>
</protein>
<feature type="chain" id="PRO_1000090794" description="Ribosome-recycling factor">
    <location>
        <begin position="1"/>
        <end position="185"/>
    </location>
</feature>
<keyword id="KW-0963">Cytoplasm</keyword>
<keyword id="KW-0648">Protein biosynthesis</keyword>
<comment type="function">
    <text evidence="1">Responsible for the release of ribosomes from messenger RNA at the termination of protein biosynthesis. May increase the efficiency of translation by recycling ribosomes from one round of translation to another.</text>
</comment>
<comment type="subcellular location">
    <subcellularLocation>
        <location evidence="1">Cytoplasm</location>
    </subcellularLocation>
</comment>
<comment type="similarity">
    <text evidence="1">Belongs to the RRF family.</text>
</comment>
<name>RRF_STRPZ</name>
<organism>
    <name type="scientific">Streptococcus pyogenes serotype M49 (strain NZ131)</name>
    <dbReference type="NCBI Taxonomy" id="471876"/>
    <lineage>
        <taxon>Bacteria</taxon>
        <taxon>Bacillati</taxon>
        <taxon>Bacillota</taxon>
        <taxon>Bacilli</taxon>
        <taxon>Lactobacillales</taxon>
        <taxon>Streptococcaceae</taxon>
        <taxon>Streptococcus</taxon>
    </lineage>
</organism>
<accession>B5XK64</accession>
<evidence type="ECO:0000255" key="1">
    <source>
        <dbReference type="HAMAP-Rule" id="MF_00040"/>
    </source>
</evidence>
<sequence length="185" mass="20572">MANAIIETAKERFAQSHQSLSREYASIRAGRANASLLDRIQVDYYGAPTPLNQLASITVPEARVLLISPFDKSSIKDIERALNASDLGITPANDGSVIRLVIPALTEETRKELAKEVKKVGENAKIAIRNIRRDAMDDAKKQEKAKEITEDELKTLEKDIQKATDDAIKEIDRMTAEKEKELLSV</sequence>
<proteinExistence type="inferred from homology"/>
<gene>
    <name evidence="1" type="primary">frr</name>
    <name type="ordered locus">Spy49_0391</name>
</gene>
<dbReference type="EMBL" id="CP000829">
    <property type="protein sequence ID" value="ACI60726.1"/>
    <property type="molecule type" value="Genomic_DNA"/>
</dbReference>
<dbReference type="SMR" id="B5XK64"/>
<dbReference type="KEGG" id="soz:Spy49_0391"/>
<dbReference type="HOGENOM" id="CLU_073981_2_0_9"/>
<dbReference type="Proteomes" id="UP000001039">
    <property type="component" value="Chromosome"/>
</dbReference>
<dbReference type="GO" id="GO:0005737">
    <property type="term" value="C:cytoplasm"/>
    <property type="evidence" value="ECO:0007669"/>
    <property type="project" value="UniProtKB-SubCell"/>
</dbReference>
<dbReference type="GO" id="GO:0043023">
    <property type="term" value="F:ribosomal large subunit binding"/>
    <property type="evidence" value="ECO:0007669"/>
    <property type="project" value="TreeGrafter"/>
</dbReference>
<dbReference type="GO" id="GO:0006415">
    <property type="term" value="P:translational termination"/>
    <property type="evidence" value="ECO:0007669"/>
    <property type="project" value="UniProtKB-UniRule"/>
</dbReference>
<dbReference type="CDD" id="cd00520">
    <property type="entry name" value="RRF"/>
    <property type="match status" value="1"/>
</dbReference>
<dbReference type="FunFam" id="1.10.132.20:FF:000001">
    <property type="entry name" value="Ribosome-recycling factor"/>
    <property type="match status" value="1"/>
</dbReference>
<dbReference type="FunFam" id="3.30.1360.40:FF:000001">
    <property type="entry name" value="Ribosome-recycling factor"/>
    <property type="match status" value="1"/>
</dbReference>
<dbReference type="Gene3D" id="3.30.1360.40">
    <property type="match status" value="1"/>
</dbReference>
<dbReference type="Gene3D" id="1.10.132.20">
    <property type="entry name" value="Ribosome-recycling factor"/>
    <property type="match status" value="1"/>
</dbReference>
<dbReference type="HAMAP" id="MF_00040">
    <property type="entry name" value="RRF"/>
    <property type="match status" value="1"/>
</dbReference>
<dbReference type="InterPro" id="IPR002661">
    <property type="entry name" value="Ribosome_recyc_fac"/>
</dbReference>
<dbReference type="InterPro" id="IPR023584">
    <property type="entry name" value="Ribosome_recyc_fac_dom"/>
</dbReference>
<dbReference type="InterPro" id="IPR036191">
    <property type="entry name" value="RRF_sf"/>
</dbReference>
<dbReference type="NCBIfam" id="TIGR00496">
    <property type="entry name" value="frr"/>
    <property type="match status" value="1"/>
</dbReference>
<dbReference type="PANTHER" id="PTHR20982:SF3">
    <property type="entry name" value="MITOCHONDRIAL RIBOSOME RECYCLING FACTOR PSEUDO 1"/>
    <property type="match status" value="1"/>
</dbReference>
<dbReference type="PANTHER" id="PTHR20982">
    <property type="entry name" value="RIBOSOME RECYCLING FACTOR"/>
    <property type="match status" value="1"/>
</dbReference>
<dbReference type="Pfam" id="PF01765">
    <property type="entry name" value="RRF"/>
    <property type="match status" value="1"/>
</dbReference>
<dbReference type="SUPFAM" id="SSF55194">
    <property type="entry name" value="Ribosome recycling factor, RRF"/>
    <property type="match status" value="1"/>
</dbReference>